<gene>
    <name type="primary">STS2</name>
</gene>
<protein>
    <recommendedName>
        <fullName>Sesquiterpene synthase 2</fullName>
        <ecNumber>4.2.3.143</ecNumber>
    </recommendedName>
    <alternativeName>
        <fullName>Kunzeaol synthase STS2</fullName>
    </alternativeName>
</protein>
<evidence type="ECO:0000250" key="1"/>
<evidence type="ECO:0000250" key="2">
    <source>
        <dbReference type="UniProtKB" id="O81192"/>
    </source>
</evidence>
<evidence type="ECO:0000269" key="3">
    <source>
    </source>
</evidence>
<evidence type="ECO:0000305" key="4"/>
<feature type="chain" id="PRO_0000424293" description="Sesquiterpene synthase 2">
    <location>
        <begin position="1"/>
        <end position="561"/>
    </location>
</feature>
<feature type="short sequence motif" description="DDXXD motif">
    <location>
        <begin position="313"/>
        <end position="317"/>
    </location>
</feature>
<feature type="binding site" evidence="2">
    <location>
        <position position="313"/>
    </location>
    <ligand>
        <name>Mg(2+)</name>
        <dbReference type="ChEBI" id="CHEBI:18420"/>
        <label>1</label>
    </ligand>
</feature>
<feature type="binding site" evidence="2">
    <location>
        <position position="313"/>
    </location>
    <ligand>
        <name>Mg(2+)</name>
        <dbReference type="ChEBI" id="CHEBI:18420"/>
        <label>2</label>
    </ligand>
</feature>
<feature type="binding site" evidence="2">
    <location>
        <position position="317"/>
    </location>
    <ligand>
        <name>Mg(2+)</name>
        <dbReference type="ChEBI" id="CHEBI:18420"/>
        <label>1</label>
    </ligand>
</feature>
<feature type="binding site" evidence="2">
    <location>
        <position position="317"/>
    </location>
    <ligand>
        <name>Mg(2+)</name>
        <dbReference type="ChEBI" id="CHEBI:18420"/>
        <label>2</label>
    </ligand>
</feature>
<feature type="binding site" evidence="2">
    <location>
        <position position="458"/>
    </location>
    <ligand>
        <name>Mg(2+)</name>
        <dbReference type="ChEBI" id="CHEBI:18420"/>
        <label>3</label>
    </ligand>
</feature>
<feature type="binding site" evidence="2">
    <location>
        <position position="466"/>
    </location>
    <ligand>
        <name>Mg(2+)</name>
        <dbReference type="ChEBI" id="CHEBI:18420"/>
        <label>3</label>
    </ligand>
</feature>
<proteinExistence type="evidence at protein level"/>
<sequence>MAVYVNSTTGPPSSVVRNSAGFHPSIWGDTFIPSGNSAVQKTDVDRKEEENLQLLKQEVKKMLTAGDTCQQDLICLIDDIQRLGLSYHFEAEIDTLLQHVKDSYLEYYGTKNHDNLHDVALSFRLLRQEGHNISSDVFSKFQDSDGKFNEKLVKDVRGMLSLFEAAHLSVHGENILEDALEFTTSHLNSYLNSNPNAPLADLVRRALKYPLRKSFNRMVARHYISIYHKYYWHKQVLLDLAKCDFNLVQKVHQKELGYITRWWKDLDFTNKLPFARDRVVECYFWITGVYFEPRYAAPRKFLTKVISLTSIIDDIYDVYGTPEELVQLTDAIDKWDINILDQLPEYMRHAYKPLLDVFAEGEEEMAKEGLPTYGVDYAKEAFKRLTVTYLHEAKWLQAQYFPTFEEYMSVALVSGAVKMLSVSSFVRMGNIATREAFEWLSKDPLIVNGLSVICRLSDDIVGHEFENQRPHIPSAVECYMKSHHVTKETAYAELRKPIINAWKDMNEECLQPEAPPKPLLERVFNLARVINFLYDGHDGYTHSSTRTKDMITSVLINPIPA</sequence>
<accession>K4LMW2</accession>
<name>STS2_THAGA</name>
<keyword id="KW-0963">Cytoplasm</keyword>
<keyword id="KW-0456">Lyase</keyword>
<keyword id="KW-0460">Magnesium</keyword>
<keyword id="KW-0464">Manganese</keyword>
<keyword id="KW-0479">Metal-binding</keyword>
<comment type="function">
    <text evidence="3">Involved in the biosynthesis of kunzeaol. Produces mainly (-)-germacrene D along with gamma-cadinene.</text>
</comment>
<comment type="catalytic activity">
    <reaction evidence="3">
        <text>(2E,6E)-farnesyl diphosphate + H2O = kunzeaol + diphosphate</text>
        <dbReference type="Rhea" id="RHEA:36063"/>
        <dbReference type="ChEBI" id="CHEBI:15377"/>
        <dbReference type="ChEBI" id="CHEBI:33019"/>
        <dbReference type="ChEBI" id="CHEBI:72776"/>
        <dbReference type="ChEBI" id="CHEBI:175763"/>
        <dbReference type="EC" id="4.2.3.143"/>
    </reaction>
</comment>
<comment type="cofactor">
    <cofactor evidence="1">
        <name>Mn(2+)</name>
        <dbReference type="ChEBI" id="CHEBI:29035"/>
    </cofactor>
    <cofactor evidence="1">
        <name>Mg(2+)</name>
        <dbReference type="ChEBI" id="CHEBI:18420"/>
    </cofactor>
    <text evidence="1">Binds 3 manganese or magnesium ions per subunit.</text>
</comment>
<comment type="biophysicochemical properties">
    <kinetics>
        <KM evidence="3">2.6 uM for farnesyl diphosphate (at pH 7.5 and 28 degrees Celsius)</KM>
        <text>kcat is 0.03 sec(-1) with farnesyl diphosphate as substrate (at pH 7.5 and 28 degrees Celsius).</text>
    </kinetics>
</comment>
<comment type="pathway">
    <text>Secondary metabolite biosynthesis; terpenoid biosynthesis.</text>
</comment>
<comment type="subcellular location">
    <subcellularLocation>
        <location evidence="4">Cytoplasm</location>
    </subcellularLocation>
</comment>
<comment type="domain">
    <text evidence="1">The Asp-Asp-Xaa-Xaa-Asp/Glu (DDXXD/E) motif is important for the catalytic activity, presumably through binding to Mg(2+).</text>
</comment>
<comment type="similarity">
    <text evidence="4">Belongs to the terpene synthase family. Tpsa subfamily.</text>
</comment>
<organism>
    <name type="scientific">Thapsia garganica</name>
    <name type="common">Deadly carrot</name>
    <dbReference type="NCBI Taxonomy" id="79022"/>
    <lineage>
        <taxon>Eukaryota</taxon>
        <taxon>Viridiplantae</taxon>
        <taxon>Streptophyta</taxon>
        <taxon>Embryophyta</taxon>
        <taxon>Tracheophyta</taxon>
        <taxon>Spermatophyta</taxon>
        <taxon>Magnoliopsida</taxon>
        <taxon>eudicotyledons</taxon>
        <taxon>Gunneridae</taxon>
        <taxon>Pentapetalae</taxon>
        <taxon>asterids</taxon>
        <taxon>campanulids</taxon>
        <taxon>Apiales</taxon>
        <taxon>Apiaceae</taxon>
        <taxon>Apioideae</taxon>
        <taxon>Scandiceae</taxon>
        <taxon>Daucinae</taxon>
        <taxon>Thapsia</taxon>
    </lineage>
</organism>
<dbReference type="EC" id="4.2.3.143"/>
<dbReference type="EMBL" id="JQ290345">
    <property type="protein sequence ID" value="AFV09099.1"/>
    <property type="molecule type" value="mRNA"/>
</dbReference>
<dbReference type="SMR" id="K4LMW2"/>
<dbReference type="KEGG" id="ag:AFV09099"/>
<dbReference type="BRENDA" id="4.2.3.143">
    <property type="organism ID" value="13957"/>
</dbReference>
<dbReference type="UniPathway" id="UPA00213"/>
<dbReference type="GO" id="GO:0005737">
    <property type="term" value="C:cytoplasm"/>
    <property type="evidence" value="ECO:0007669"/>
    <property type="project" value="UniProtKB-SubCell"/>
</dbReference>
<dbReference type="GO" id="GO:0000287">
    <property type="term" value="F:magnesium ion binding"/>
    <property type="evidence" value="ECO:0007669"/>
    <property type="project" value="InterPro"/>
</dbReference>
<dbReference type="GO" id="GO:0010333">
    <property type="term" value="F:terpene synthase activity"/>
    <property type="evidence" value="ECO:0007669"/>
    <property type="project" value="InterPro"/>
</dbReference>
<dbReference type="GO" id="GO:0016102">
    <property type="term" value="P:diterpenoid biosynthetic process"/>
    <property type="evidence" value="ECO:0007669"/>
    <property type="project" value="InterPro"/>
</dbReference>
<dbReference type="CDD" id="cd00684">
    <property type="entry name" value="Terpene_cyclase_plant_C1"/>
    <property type="match status" value="1"/>
</dbReference>
<dbReference type="FunFam" id="1.10.600.10:FF:000007">
    <property type="entry name" value="Isoprene synthase, chloroplastic"/>
    <property type="match status" value="1"/>
</dbReference>
<dbReference type="FunFam" id="1.50.10.130:FF:000001">
    <property type="entry name" value="Isoprene synthase, chloroplastic"/>
    <property type="match status" value="1"/>
</dbReference>
<dbReference type="Gene3D" id="1.10.600.10">
    <property type="entry name" value="Farnesyl Diphosphate Synthase"/>
    <property type="match status" value="1"/>
</dbReference>
<dbReference type="Gene3D" id="1.50.10.130">
    <property type="entry name" value="Terpene synthase, N-terminal domain"/>
    <property type="match status" value="1"/>
</dbReference>
<dbReference type="InterPro" id="IPR008949">
    <property type="entry name" value="Isoprenoid_synthase_dom_sf"/>
</dbReference>
<dbReference type="InterPro" id="IPR034741">
    <property type="entry name" value="Terpene_cyclase-like_1_C"/>
</dbReference>
<dbReference type="InterPro" id="IPR044814">
    <property type="entry name" value="Terpene_cyclase_plant_C1"/>
</dbReference>
<dbReference type="InterPro" id="IPR001906">
    <property type="entry name" value="Terpene_synth_N"/>
</dbReference>
<dbReference type="InterPro" id="IPR036965">
    <property type="entry name" value="Terpene_synth_N_sf"/>
</dbReference>
<dbReference type="InterPro" id="IPR050148">
    <property type="entry name" value="Terpene_synthase-like"/>
</dbReference>
<dbReference type="InterPro" id="IPR005630">
    <property type="entry name" value="Terpene_synthase_metal-bd"/>
</dbReference>
<dbReference type="InterPro" id="IPR008930">
    <property type="entry name" value="Terpenoid_cyclase/PrenylTrfase"/>
</dbReference>
<dbReference type="PANTHER" id="PTHR31225:SF221">
    <property type="entry name" value="(-)-GERMACRENE D SYNTHASE"/>
    <property type="match status" value="1"/>
</dbReference>
<dbReference type="PANTHER" id="PTHR31225">
    <property type="entry name" value="OS04G0344100 PROTEIN-RELATED"/>
    <property type="match status" value="1"/>
</dbReference>
<dbReference type="Pfam" id="PF01397">
    <property type="entry name" value="Terpene_synth"/>
    <property type="match status" value="1"/>
</dbReference>
<dbReference type="Pfam" id="PF03936">
    <property type="entry name" value="Terpene_synth_C"/>
    <property type="match status" value="1"/>
</dbReference>
<dbReference type="SFLD" id="SFLDS00005">
    <property type="entry name" value="Isoprenoid_Synthase_Type_I"/>
    <property type="match status" value="1"/>
</dbReference>
<dbReference type="SFLD" id="SFLDG01019">
    <property type="entry name" value="Terpene_Cyclase_Like_1_C_Termi"/>
    <property type="match status" value="1"/>
</dbReference>
<dbReference type="SUPFAM" id="SSF48239">
    <property type="entry name" value="Terpenoid cyclases/Protein prenyltransferases"/>
    <property type="match status" value="1"/>
</dbReference>
<dbReference type="SUPFAM" id="SSF48576">
    <property type="entry name" value="Terpenoid synthases"/>
    <property type="match status" value="1"/>
</dbReference>
<reference key="1">
    <citation type="journal article" date="2012" name="Biochem. J.">
        <title>Identification and characterization of a kunzeaol synthase from Thapsia garganica: implications for the biosynthesis of the pharmaceutical thapsigargin.</title>
        <authorList>
            <person name="Pickel B."/>
            <person name="Drew D.P."/>
            <person name="Manczak T."/>
            <person name="Weitzel C."/>
            <person name="Simonsen H.T."/>
            <person name="Ro D.-K."/>
        </authorList>
    </citation>
    <scope>NUCLEOTIDE SEQUENCE [MRNA]</scope>
    <scope>FUNCTION</scope>
    <scope>CATALYTIC ACTIVITY</scope>
    <scope>BIOPHYSICOCHEMICAL PROPERTIES</scope>
    <source>
        <tissue>Root</tissue>
    </source>
</reference>